<dbReference type="EMBL" id="L19263">
    <property type="protein sequence ID" value="AAA18512.1"/>
    <property type="molecule type" value="Genomic_DNA"/>
</dbReference>
<dbReference type="GO" id="GO:0009507">
    <property type="term" value="C:chloroplast"/>
    <property type="evidence" value="ECO:0007669"/>
    <property type="project" value="UniProtKB-SubCell"/>
</dbReference>
<dbReference type="InterPro" id="IPR007572">
    <property type="entry name" value="Uncharacterised_Ycf20"/>
</dbReference>
<dbReference type="PANTHER" id="PTHR33787">
    <property type="match status" value="1"/>
</dbReference>
<dbReference type="PANTHER" id="PTHR33787:SF5">
    <property type="entry name" value="YCF20-LIKE PROTEIN"/>
    <property type="match status" value="1"/>
</dbReference>
<dbReference type="Pfam" id="PF04483">
    <property type="entry name" value="DUF565"/>
    <property type="match status" value="1"/>
</dbReference>
<feature type="chain" id="PRO_0000217323" description="Uncharacterized protein ycf20">
    <location>
        <begin position="1"/>
        <end position="100"/>
    </location>
</feature>
<organism>
    <name type="scientific">Aglaothamnion neglectum</name>
    <name type="common">Red alga</name>
    <dbReference type="NCBI Taxonomy" id="2765"/>
    <lineage>
        <taxon>Eukaryota</taxon>
        <taxon>Rhodophyta</taxon>
        <taxon>Florideophyceae</taxon>
        <taxon>Rhodymeniophycidae</taxon>
        <taxon>Ceramiales</taxon>
        <taxon>Callithamniaceae</taxon>
        <taxon>Aglaothamnion</taxon>
    </lineage>
</organism>
<evidence type="ECO:0000305" key="1"/>
<gene>
    <name type="primary">ycf20</name>
</gene>
<keyword id="KW-0150">Chloroplast</keyword>
<keyword id="KW-0934">Plastid</keyword>
<proteinExistence type="inferred from homology"/>
<reference key="1">
    <citation type="journal article" date="1993" name="J. Phycol.">
        <title>The phycobilisome b18 subunit gene of allophycocyanin is located on the plastid genome in Aglaothamnion neglectum (Rhodophyta) and cotranscribed with an unidentified open reading frame.</title>
        <authorList>
            <person name="Apt K.E."/>
            <person name="Grossman A.R."/>
        </authorList>
    </citation>
    <scope>NUCLEOTIDE SEQUENCE [GENOMIC DNA]</scope>
</reference>
<sequence>MQFILYIIGQYLYYHINNLSLQLISLFLGYFFCTIICSIPKETGDWGLITALLIVGINETMSALIYSYKKYENNIIVKTINGIKIGIIYGLFVDSFKLGS</sequence>
<geneLocation type="chloroplast"/>
<protein>
    <recommendedName>
        <fullName>Uncharacterized protein ycf20</fullName>
    </recommendedName>
</protein>
<accession>P34813</accession>
<comment type="subcellular location">
    <subcellularLocation>
        <location>Plastid</location>
        <location>Chloroplast</location>
    </subcellularLocation>
</comment>
<comment type="similarity">
    <text evidence="1">Belongs to the ycf20 family.</text>
</comment>
<name>YCF20_AGLNE</name>